<name>RPIA_BIFLO</name>
<proteinExistence type="inferred from homology"/>
<comment type="function">
    <text evidence="1">Catalyzes the reversible conversion of ribose-5-phosphate to ribulose 5-phosphate.</text>
</comment>
<comment type="catalytic activity">
    <reaction evidence="1">
        <text>aldehydo-D-ribose 5-phosphate = D-ribulose 5-phosphate</text>
        <dbReference type="Rhea" id="RHEA:14657"/>
        <dbReference type="ChEBI" id="CHEBI:58121"/>
        <dbReference type="ChEBI" id="CHEBI:58273"/>
        <dbReference type="EC" id="5.3.1.6"/>
    </reaction>
</comment>
<comment type="pathway">
    <text evidence="1">Carbohydrate degradation; pentose phosphate pathway; D-ribose 5-phosphate from D-ribulose 5-phosphate (non-oxidative stage): step 1/1.</text>
</comment>
<comment type="subunit">
    <text evidence="1">Homodimer.</text>
</comment>
<comment type="similarity">
    <text evidence="1">Belongs to the ribose 5-phosphate isomerase family.</text>
</comment>
<sequence>MDKAQQDALKKAAGIEAAKLVENGMIAGLGTGSTVKFLVDELGRRHQEEGLEFTGVTTSRRTQAQAESYGIKIVDIDDVDHIDVTIDGADEVDKNFNGIKGGGAALLWEKIVATNSNQIVWIVDESKVVDTIGKFPLPVEVIPFGAGQVIKKFEARGYKPVLRLDADGKEVRTDENNFVVDLHLERIDHPQELAEDLINTVGVVEHGLFLNMVDKVIVGDPNGPRVMTNANK</sequence>
<evidence type="ECO:0000255" key="1">
    <source>
        <dbReference type="HAMAP-Rule" id="MF_00170"/>
    </source>
</evidence>
<dbReference type="EC" id="5.3.1.6" evidence="1"/>
<dbReference type="EMBL" id="AE014295">
    <property type="protein sequence ID" value="AAN25411.1"/>
    <property type="molecule type" value="Genomic_DNA"/>
</dbReference>
<dbReference type="RefSeq" id="NP_696775.1">
    <property type="nucleotide sequence ID" value="NC_004307.2"/>
</dbReference>
<dbReference type="RefSeq" id="WP_007052314.1">
    <property type="nucleotide sequence ID" value="NC_004307.2"/>
</dbReference>
<dbReference type="SMR" id="Q8G3X9"/>
<dbReference type="STRING" id="206672.BL1623"/>
<dbReference type="EnsemblBacteria" id="AAN25411">
    <property type="protein sequence ID" value="AAN25411"/>
    <property type="gene ID" value="BL1623"/>
</dbReference>
<dbReference type="GeneID" id="69578855"/>
<dbReference type="KEGG" id="blo:BL1623"/>
<dbReference type="PATRIC" id="fig|206672.9.peg.1678"/>
<dbReference type="HOGENOM" id="CLU_056590_1_0_11"/>
<dbReference type="OrthoDB" id="5870696at2"/>
<dbReference type="PhylomeDB" id="Q8G3X9"/>
<dbReference type="UniPathway" id="UPA00115">
    <property type="reaction ID" value="UER00412"/>
</dbReference>
<dbReference type="Proteomes" id="UP000000439">
    <property type="component" value="Chromosome"/>
</dbReference>
<dbReference type="GO" id="GO:0005829">
    <property type="term" value="C:cytosol"/>
    <property type="evidence" value="ECO:0007669"/>
    <property type="project" value="TreeGrafter"/>
</dbReference>
<dbReference type="GO" id="GO:0004751">
    <property type="term" value="F:ribose-5-phosphate isomerase activity"/>
    <property type="evidence" value="ECO:0007669"/>
    <property type="project" value="UniProtKB-UniRule"/>
</dbReference>
<dbReference type="GO" id="GO:0006014">
    <property type="term" value="P:D-ribose metabolic process"/>
    <property type="evidence" value="ECO:0007669"/>
    <property type="project" value="TreeGrafter"/>
</dbReference>
<dbReference type="GO" id="GO:0009052">
    <property type="term" value="P:pentose-phosphate shunt, non-oxidative branch"/>
    <property type="evidence" value="ECO:0007669"/>
    <property type="project" value="UniProtKB-UniRule"/>
</dbReference>
<dbReference type="CDD" id="cd01398">
    <property type="entry name" value="RPI_A"/>
    <property type="match status" value="1"/>
</dbReference>
<dbReference type="FunFam" id="3.40.50.1360:FF:000001">
    <property type="entry name" value="Ribose-5-phosphate isomerase A"/>
    <property type="match status" value="1"/>
</dbReference>
<dbReference type="Gene3D" id="3.30.70.260">
    <property type="match status" value="1"/>
</dbReference>
<dbReference type="Gene3D" id="3.40.50.1360">
    <property type="match status" value="1"/>
</dbReference>
<dbReference type="HAMAP" id="MF_00170">
    <property type="entry name" value="Rib_5P_isom_A"/>
    <property type="match status" value="1"/>
</dbReference>
<dbReference type="InterPro" id="IPR037171">
    <property type="entry name" value="NagB/RpiA_transferase-like"/>
</dbReference>
<dbReference type="InterPro" id="IPR020672">
    <property type="entry name" value="Ribose5P_isomerase_typA_subgr"/>
</dbReference>
<dbReference type="InterPro" id="IPR004788">
    <property type="entry name" value="Ribose5P_isomerase_type_A"/>
</dbReference>
<dbReference type="NCBIfam" id="NF001924">
    <property type="entry name" value="PRK00702.1"/>
    <property type="match status" value="1"/>
</dbReference>
<dbReference type="NCBIfam" id="TIGR00021">
    <property type="entry name" value="rpiA"/>
    <property type="match status" value="1"/>
</dbReference>
<dbReference type="PANTHER" id="PTHR11934">
    <property type="entry name" value="RIBOSE-5-PHOSPHATE ISOMERASE"/>
    <property type="match status" value="1"/>
</dbReference>
<dbReference type="PANTHER" id="PTHR11934:SF0">
    <property type="entry name" value="RIBOSE-5-PHOSPHATE ISOMERASE"/>
    <property type="match status" value="1"/>
</dbReference>
<dbReference type="Pfam" id="PF06026">
    <property type="entry name" value="Rib_5-P_isom_A"/>
    <property type="match status" value="1"/>
</dbReference>
<dbReference type="SUPFAM" id="SSF75445">
    <property type="entry name" value="D-ribose-5-phosphate isomerase (RpiA), lid domain"/>
    <property type="match status" value="1"/>
</dbReference>
<dbReference type="SUPFAM" id="SSF100950">
    <property type="entry name" value="NagB/RpiA/CoA transferase-like"/>
    <property type="match status" value="1"/>
</dbReference>
<organism>
    <name type="scientific">Bifidobacterium longum (strain NCC 2705)</name>
    <dbReference type="NCBI Taxonomy" id="206672"/>
    <lineage>
        <taxon>Bacteria</taxon>
        <taxon>Bacillati</taxon>
        <taxon>Actinomycetota</taxon>
        <taxon>Actinomycetes</taxon>
        <taxon>Bifidobacteriales</taxon>
        <taxon>Bifidobacteriaceae</taxon>
        <taxon>Bifidobacterium</taxon>
    </lineage>
</organism>
<feature type="chain" id="PRO_0000158390" description="Ribose-5-phosphate isomerase A">
    <location>
        <begin position="1"/>
        <end position="232"/>
    </location>
</feature>
<feature type="active site" description="Proton acceptor" evidence="1">
    <location>
        <position position="109"/>
    </location>
</feature>
<feature type="binding site" evidence="1">
    <location>
        <begin position="31"/>
        <end position="34"/>
    </location>
    <ligand>
        <name>substrate</name>
    </ligand>
</feature>
<feature type="binding site" evidence="1">
    <location>
        <begin position="87"/>
        <end position="90"/>
    </location>
    <ligand>
        <name>substrate</name>
    </ligand>
</feature>
<feature type="binding site" evidence="1">
    <location>
        <begin position="100"/>
        <end position="103"/>
    </location>
    <ligand>
        <name>substrate</name>
    </ligand>
</feature>
<feature type="binding site" evidence="1">
    <location>
        <position position="127"/>
    </location>
    <ligand>
        <name>substrate</name>
    </ligand>
</feature>
<gene>
    <name evidence="1" type="primary">rpiA</name>
    <name type="ordered locus">BL1623</name>
</gene>
<keyword id="KW-0413">Isomerase</keyword>
<keyword id="KW-1185">Reference proteome</keyword>
<reference key="1">
    <citation type="journal article" date="2002" name="Proc. Natl. Acad. Sci. U.S.A.">
        <title>The genome sequence of Bifidobacterium longum reflects its adaptation to the human gastrointestinal tract.</title>
        <authorList>
            <person name="Schell M.A."/>
            <person name="Karmirantzou M."/>
            <person name="Snel B."/>
            <person name="Vilanova D."/>
            <person name="Berger B."/>
            <person name="Pessi G."/>
            <person name="Zwahlen M.-C."/>
            <person name="Desiere F."/>
            <person name="Bork P."/>
            <person name="Delley M."/>
            <person name="Pridmore R.D."/>
            <person name="Arigoni F."/>
        </authorList>
    </citation>
    <scope>NUCLEOTIDE SEQUENCE [LARGE SCALE GENOMIC DNA]</scope>
    <source>
        <strain>NCC 2705</strain>
    </source>
</reference>
<protein>
    <recommendedName>
        <fullName evidence="1">Ribose-5-phosphate isomerase A</fullName>
        <ecNumber evidence="1">5.3.1.6</ecNumber>
    </recommendedName>
    <alternativeName>
        <fullName evidence="1">Phosphoriboisomerase A</fullName>
        <shortName evidence="1">PRI</shortName>
    </alternativeName>
</protein>
<accession>Q8G3X9</accession>